<keyword id="KW-0045">Antibiotic biosynthesis</keyword>
<keyword id="KW-0456">Lyase</keyword>
<keyword id="KW-0520">NAD</keyword>
<evidence type="ECO:0000250" key="1"/>
<evidence type="ECO:0000255" key="2"/>
<evidence type="ECO:0000305" key="3"/>
<sequence length="336" mass="36731">MRILVTGGAGFIGSEFVRATLRGTLPGSSGTQVTVLDKLTYSGNVLNLAPIADLRNYRFVRGDICDQDLVDDVVAGHDAIVHFAAETHVDRSIGSAASFVRTNAMGTQVLLEAASRHRLGRFVHISTDEVYGSIPEGAWDEESPVAPNAPYAAAKAAGDLLALAWHRTHGLDVVVTRCTNNYGPYQYPEKLIPLFTTNVMDGQQVPVYGEGHNRRQWLHVSDHCRAIQLVLLGGRAGEVYHIGGGTELTNLELAEQILKSCGAGWDMVRHVPDRPGHDFRYSLDTTKIRTELGFSPRVAFADGLVETVEWYRDNRAWWEPLKSPDEATGSPGDAGR</sequence>
<reference key="1">
    <citation type="journal article" date="2000" name="Antimicrob. Agents Chemother.">
        <title>Identification of the novobiocin biosynthetic gene cluster of Streptomyces spheroides NCIB 11891.</title>
        <authorList>
            <person name="Steffensky M."/>
            <person name="Muhlenweg A."/>
            <person name="Wang Z.X."/>
            <person name="Li S.M."/>
            <person name="Heide L."/>
        </authorList>
    </citation>
    <scope>NUCLEOTIDE SEQUENCE [GENOMIC DNA]</scope>
    <source>
        <strain>ATCC 23965 / DSM 40292 / JCM 4252 / NBRC 12917 / NCIMB 11891 / NRRL 2449</strain>
    </source>
</reference>
<reference key="2">
    <citation type="journal article" date="2006" name="Planta Med.">
        <title>The biosynthetic gene clusters of aminocoumarin antibiotics.</title>
        <authorList>
            <person name="Li S.M."/>
            <person name="Heide L."/>
        </authorList>
    </citation>
    <scope>REVIEW</scope>
    <scope>POSSIBLE FUNCTION</scope>
</reference>
<name>NOVT_STRNV</name>
<accession>Q9L9E8</accession>
<feature type="chain" id="PRO_0000424007" description="dTDP-glucose 4,6-dehydratase">
    <location>
        <begin position="1"/>
        <end position="336"/>
    </location>
</feature>
<feature type="active site" description="Proton donor" evidence="1">
    <location>
        <position position="128"/>
    </location>
</feature>
<feature type="active site" description="Proton acceptor" evidence="1">
    <location>
        <position position="129"/>
    </location>
</feature>
<feature type="active site" description="Proton acceptor" evidence="1">
    <location>
        <position position="151"/>
    </location>
</feature>
<feature type="binding site" evidence="2">
    <location>
        <begin position="7"/>
        <end position="13"/>
    </location>
    <ligand>
        <name>NAD(+)</name>
        <dbReference type="ChEBI" id="CHEBI:57540"/>
    </ligand>
</feature>
<feature type="binding site" evidence="1">
    <location>
        <begin position="37"/>
        <end position="40"/>
    </location>
    <ligand>
        <name>NAD(+)</name>
        <dbReference type="ChEBI" id="CHEBI:57540"/>
    </ligand>
</feature>
<feature type="binding site" evidence="1">
    <location>
        <begin position="63"/>
        <end position="64"/>
    </location>
    <ligand>
        <name>NAD(+)</name>
        <dbReference type="ChEBI" id="CHEBI:57540"/>
    </ligand>
</feature>
<feature type="binding site" evidence="1">
    <location>
        <position position="87"/>
    </location>
    <ligand>
        <name>substrate</name>
    </ligand>
</feature>
<feature type="binding site" evidence="1">
    <location>
        <position position="102"/>
    </location>
    <ligand>
        <name>NAD(+)</name>
        <dbReference type="ChEBI" id="CHEBI:57540"/>
    </ligand>
</feature>
<feature type="binding site" evidence="1">
    <location>
        <begin position="127"/>
        <end position="129"/>
    </location>
    <ligand>
        <name>substrate</name>
    </ligand>
</feature>
<feature type="binding site" evidence="1">
    <location>
        <begin position="151"/>
        <end position="155"/>
    </location>
    <ligand>
        <name>NAD(+)</name>
        <dbReference type="ChEBI" id="CHEBI:57540"/>
    </ligand>
</feature>
<feature type="binding site" evidence="1">
    <location>
        <position position="180"/>
    </location>
    <ligand>
        <name>substrate</name>
    </ligand>
</feature>
<feature type="binding site" evidence="1">
    <location>
        <position position="181"/>
    </location>
    <ligand>
        <name>NAD(+)</name>
        <dbReference type="ChEBI" id="CHEBI:57540"/>
    </ligand>
</feature>
<feature type="binding site" evidence="1">
    <location>
        <begin position="190"/>
        <end position="191"/>
    </location>
    <ligand>
        <name>substrate</name>
    </ligand>
</feature>
<feature type="binding site" evidence="1">
    <location>
        <begin position="206"/>
        <end position="208"/>
    </location>
    <ligand>
        <name>substrate</name>
    </ligand>
</feature>
<feature type="binding site" evidence="1">
    <location>
        <position position="215"/>
    </location>
    <ligand>
        <name>substrate</name>
    </ligand>
</feature>
<feature type="binding site" evidence="1">
    <location>
        <position position="250"/>
    </location>
    <ligand>
        <name>substrate</name>
    </ligand>
</feature>
<feature type="binding site" evidence="1">
    <location>
        <begin position="274"/>
        <end position="277"/>
    </location>
    <ligand>
        <name>substrate</name>
    </ligand>
</feature>
<comment type="function">
    <text>dTDP-glucose 4,6-dehydratase involved in the generation of the deoxysugar in the novobiocin biosynthesis pathway, an aminocoumarin family antibiotic that targets bacterial DNA gyrases.</text>
</comment>
<comment type="catalytic activity">
    <reaction>
        <text>dTDP-alpha-D-glucose = dTDP-4-dehydro-6-deoxy-alpha-D-glucose + H2O</text>
        <dbReference type="Rhea" id="RHEA:17221"/>
        <dbReference type="ChEBI" id="CHEBI:15377"/>
        <dbReference type="ChEBI" id="CHEBI:57477"/>
        <dbReference type="ChEBI" id="CHEBI:57649"/>
        <dbReference type="EC" id="4.2.1.46"/>
    </reaction>
</comment>
<comment type="cofactor">
    <cofactor evidence="1">
        <name>NAD(+)</name>
        <dbReference type="ChEBI" id="CHEBI:57540"/>
    </cofactor>
    <text evidence="1">Binds 1 NAD(+) per subunit.</text>
</comment>
<comment type="pathway">
    <text>Antibiotic biosynthesis; novobiocin biosynthesis.</text>
</comment>
<comment type="subunit">
    <text evidence="1">Homodimer.</text>
</comment>
<comment type="similarity">
    <text evidence="3">Belongs to the NAD(P)-dependent epimerase/dehydratase family. dTDP-glucose dehydratase subfamily.</text>
</comment>
<organism>
    <name type="scientific">Streptomyces niveus</name>
    <name type="common">Streptomyces spheroides</name>
    <dbReference type="NCBI Taxonomy" id="193462"/>
    <lineage>
        <taxon>Bacteria</taxon>
        <taxon>Bacillati</taxon>
        <taxon>Actinomycetota</taxon>
        <taxon>Actinomycetes</taxon>
        <taxon>Kitasatosporales</taxon>
        <taxon>Streptomycetaceae</taxon>
        <taxon>Streptomyces</taxon>
    </lineage>
</organism>
<protein>
    <recommendedName>
        <fullName>dTDP-glucose 4,6-dehydratase</fullName>
        <ecNumber>4.2.1.46</ecNumber>
    </recommendedName>
    <alternativeName>
        <fullName>Novobiocin biosynthesis protein T</fullName>
    </alternativeName>
</protein>
<proteinExistence type="inferred from homology"/>
<gene>
    <name type="primary">novT</name>
</gene>
<dbReference type="EC" id="4.2.1.46"/>
<dbReference type="EMBL" id="AF170880">
    <property type="protein sequence ID" value="AAF67513.1"/>
    <property type="molecule type" value="Genomic_DNA"/>
</dbReference>
<dbReference type="RefSeq" id="WP_069626148.1">
    <property type="nucleotide sequence ID" value="NZ_JBFBIX010000004.1"/>
</dbReference>
<dbReference type="SMR" id="Q9L9E8"/>
<dbReference type="KEGG" id="ag:AAF67513"/>
<dbReference type="BioCyc" id="MetaCyc:MONOMER-18087"/>
<dbReference type="UniPathway" id="UPA01035"/>
<dbReference type="GO" id="GO:0008460">
    <property type="term" value="F:dTDP-glucose 4,6-dehydratase activity"/>
    <property type="evidence" value="ECO:0007669"/>
    <property type="project" value="UniProtKB-EC"/>
</dbReference>
<dbReference type="GO" id="GO:0017000">
    <property type="term" value="P:antibiotic biosynthetic process"/>
    <property type="evidence" value="ECO:0007669"/>
    <property type="project" value="UniProtKB-KW"/>
</dbReference>
<dbReference type="GO" id="GO:0009225">
    <property type="term" value="P:nucleotide-sugar metabolic process"/>
    <property type="evidence" value="ECO:0007669"/>
    <property type="project" value="InterPro"/>
</dbReference>
<dbReference type="CDD" id="cd05246">
    <property type="entry name" value="dTDP_GD_SDR_e"/>
    <property type="match status" value="1"/>
</dbReference>
<dbReference type="Gene3D" id="3.40.50.720">
    <property type="entry name" value="NAD(P)-binding Rossmann-like Domain"/>
    <property type="match status" value="1"/>
</dbReference>
<dbReference type="Gene3D" id="3.90.25.10">
    <property type="entry name" value="UDP-galactose 4-epimerase, domain 1"/>
    <property type="match status" value="1"/>
</dbReference>
<dbReference type="InterPro" id="IPR005888">
    <property type="entry name" value="dTDP_Gluc_deHydtase"/>
</dbReference>
<dbReference type="InterPro" id="IPR016040">
    <property type="entry name" value="NAD(P)-bd_dom"/>
</dbReference>
<dbReference type="InterPro" id="IPR036291">
    <property type="entry name" value="NAD(P)-bd_dom_sf"/>
</dbReference>
<dbReference type="NCBIfam" id="TIGR01181">
    <property type="entry name" value="dTDP_gluc_dehyt"/>
    <property type="match status" value="1"/>
</dbReference>
<dbReference type="PANTHER" id="PTHR43000">
    <property type="entry name" value="DTDP-D-GLUCOSE 4,6-DEHYDRATASE-RELATED"/>
    <property type="match status" value="1"/>
</dbReference>
<dbReference type="Pfam" id="PF16363">
    <property type="entry name" value="GDP_Man_Dehyd"/>
    <property type="match status" value="1"/>
</dbReference>
<dbReference type="SUPFAM" id="SSF51735">
    <property type="entry name" value="NAD(P)-binding Rossmann-fold domains"/>
    <property type="match status" value="1"/>
</dbReference>
<dbReference type="PROSITE" id="PS00061">
    <property type="entry name" value="ADH_SHORT"/>
    <property type="match status" value="1"/>
</dbReference>